<proteinExistence type="evidence at protein level"/>
<accession>Q67333</accession>
<feature type="signal peptide" evidence="1">
    <location>
        <begin position="1"/>
        <end position="15"/>
    </location>
</feature>
<feature type="chain" id="PRO_0000440393" description="Hemagglutinin" evidence="1">
    <location>
        <begin position="16"/>
        <end position="562"/>
    </location>
</feature>
<feature type="chain" id="PRO_0000280201" description="Hemagglutinin HA1 chain" evidence="1">
    <location>
        <begin position="16"/>
        <end position="339"/>
    </location>
</feature>
<feature type="chain" id="PRO_0000280202" description="Hemagglutinin HA2 chain" evidence="1">
    <location>
        <begin position="341"/>
        <end position="562"/>
    </location>
</feature>
<feature type="topological domain" description="Extracellular" evidence="1">
    <location>
        <begin position="16"/>
        <end position="525"/>
    </location>
</feature>
<feature type="transmembrane region" description="Helical" evidence="1">
    <location>
        <begin position="526"/>
        <end position="546"/>
    </location>
</feature>
<feature type="topological domain" description="Cytoplasmic" evidence="1">
    <location>
        <begin position="547"/>
        <end position="562"/>
    </location>
</feature>
<feature type="site" description="Cleavage; by host" evidence="1">
    <location>
        <begin position="340"/>
        <end position="341"/>
    </location>
</feature>
<feature type="lipid moiety-binding region" description="S-palmitoyl cysteine; by host" evidence="1">
    <location>
        <position position="551"/>
    </location>
</feature>
<feature type="lipid moiety-binding region" description="S-palmitoyl cysteine; by host" evidence="1">
    <location>
        <position position="558"/>
    </location>
</feature>
<feature type="lipid moiety-binding region" description="S-palmitoyl cysteine; by host" evidence="1">
    <location>
        <position position="561"/>
    </location>
</feature>
<feature type="glycosylation site" description="N-linked (GlcNAc...) asparagine; by host" evidence="1">
    <location>
        <position position="25"/>
    </location>
</feature>
<feature type="glycosylation site" description="N-linked (GlcNAc...) asparagine; by host" evidence="1">
    <location>
        <position position="26"/>
    </location>
</feature>
<feature type="glycosylation site" description="N-linked (GlcNAc...) asparagine; by host" evidence="1">
    <location>
        <position position="38"/>
    </location>
</feature>
<feature type="glycosylation site" description="N-linked (GlcNAc...) asparagine; by host" evidence="1">
    <location>
        <position position="179"/>
    </location>
</feature>
<feature type="glycosylation site" description="N-linked (GlcNAc...) asparagine; by host" evidence="1">
    <location>
        <position position="180"/>
    </location>
</feature>
<feature type="glycosylation site" description="N-linked (GlcNAc...) asparagine; by host" evidence="1">
    <location>
        <position position="300"/>
    </location>
</feature>
<feature type="glycosylation site" description="N-linked (GlcNAc...) asparagine; by host" evidence="1">
    <location>
        <position position="494"/>
    </location>
</feature>
<feature type="disulfide bond" description="Interchain (between HA1 and HA2 chains)" evidence="1">
    <location>
        <begin position="19"/>
        <end position="477"/>
    </location>
</feature>
<feature type="disulfide bond" evidence="1">
    <location>
        <begin position="57"/>
        <end position="288"/>
    </location>
</feature>
<feature type="disulfide bond" evidence="1">
    <location>
        <begin position="70"/>
        <end position="82"/>
    </location>
</feature>
<feature type="disulfide bond" evidence="1">
    <location>
        <begin position="105"/>
        <end position="149"/>
    </location>
</feature>
<feature type="disulfide bond" evidence="1">
    <location>
        <begin position="292"/>
        <end position="316"/>
    </location>
</feature>
<feature type="disulfide bond" evidence="1">
    <location>
        <begin position="484"/>
        <end position="488"/>
    </location>
</feature>
<feature type="strand" evidence="10">
    <location>
        <begin position="17"/>
        <end position="23"/>
    </location>
</feature>
<feature type="strand" evidence="10">
    <location>
        <begin position="29"/>
        <end position="31"/>
    </location>
</feature>
<feature type="strand" evidence="10">
    <location>
        <begin position="37"/>
        <end position="42"/>
    </location>
</feature>
<feature type="strand" evidence="10">
    <location>
        <begin position="44"/>
        <end position="46"/>
    </location>
</feature>
<feature type="strand" evidence="10">
    <location>
        <begin position="56"/>
        <end position="59"/>
    </location>
</feature>
<feature type="strand" evidence="6">
    <location>
        <begin position="65"/>
        <end position="68"/>
    </location>
</feature>
<feature type="helix" evidence="10">
    <location>
        <begin position="72"/>
        <end position="77"/>
    </location>
</feature>
<feature type="helix" evidence="10">
    <location>
        <begin position="80"/>
        <end position="85"/>
    </location>
</feature>
<feature type="strand" evidence="10">
    <location>
        <begin position="94"/>
        <end position="96"/>
    </location>
</feature>
<feature type="strand" evidence="10">
    <location>
        <begin position="101"/>
        <end position="103"/>
    </location>
</feature>
<feature type="strand" evidence="8">
    <location>
        <begin position="108"/>
        <end position="110"/>
    </location>
</feature>
<feature type="helix" evidence="10">
    <location>
        <begin position="113"/>
        <end position="120"/>
    </location>
</feature>
<feature type="strand" evidence="10">
    <location>
        <begin position="123"/>
        <end position="130"/>
    </location>
</feature>
<feature type="helix" evidence="10">
    <location>
        <begin position="134"/>
        <end position="136"/>
    </location>
</feature>
<feature type="strand" evidence="10">
    <location>
        <begin position="146"/>
        <end position="151"/>
    </location>
</feature>
<feature type="strand" evidence="10">
    <location>
        <begin position="154"/>
        <end position="156"/>
    </location>
</feature>
<feature type="strand" evidence="10">
    <location>
        <begin position="161"/>
        <end position="163"/>
    </location>
</feature>
<feature type="strand" evidence="3">
    <location>
        <begin position="167"/>
        <end position="169"/>
    </location>
</feature>
<feature type="strand" evidence="10">
    <location>
        <begin position="174"/>
        <end position="179"/>
    </location>
</feature>
<feature type="strand" evidence="10">
    <location>
        <begin position="182"/>
        <end position="184"/>
    </location>
</feature>
<feature type="strand" evidence="10">
    <location>
        <begin position="186"/>
        <end position="194"/>
    </location>
</feature>
<feature type="helix" evidence="10">
    <location>
        <begin position="198"/>
        <end position="205"/>
    </location>
</feature>
<feature type="strand" evidence="7">
    <location>
        <begin position="206"/>
        <end position="209"/>
    </location>
</feature>
<feature type="strand" evidence="10">
    <location>
        <begin position="212"/>
        <end position="215"/>
    </location>
</feature>
<feature type="strand" evidence="10">
    <location>
        <begin position="220"/>
        <end position="223"/>
    </location>
</feature>
<feature type="strand" evidence="10">
    <location>
        <begin position="239"/>
        <end position="247"/>
    </location>
</feature>
<feature type="strand" evidence="10">
    <location>
        <begin position="252"/>
        <end position="259"/>
    </location>
</feature>
<feature type="strand" evidence="10">
    <location>
        <begin position="261"/>
        <end position="273"/>
    </location>
</feature>
<feature type="strand" evidence="10">
    <location>
        <begin position="278"/>
        <end position="280"/>
    </location>
</feature>
<feature type="strand" evidence="10">
    <location>
        <begin position="285"/>
        <end position="293"/>
    </location>
</feature>
<feature type="strand" evidence="5">
    <location>
        <begin position="297"/>
        <end position="299"/>
    </location>
</feature>
<feature type="strand" evidence="10">
    <location>
        <begin position="303"/>
        <end position="306"/>
    </location>
</feature>
<feature type="strand" evidence="10">
    <location>
        <begin position="313"/>
        <end position="315"/>
    </location>
</feature>
<feature type="strand" evidence="10">
    <location>
        <begin position="326"/>
        <end position="328"/>
    </location>
</feature>
<feature type="turn" evidence="10">
    <location>
        <begin position="349"/>
        <end position="351"/>
    </location>
</feature>
<feature type="strand" evidence="10">
    <location>
        <begin position="354"/>
        <end position="356"/>
    </location>
</feature>
<feature type="strand" evidence="10">
    <location>
        <begin position="361"/>
        <end position="367"/>
    </location>
</feature>
<feature type="strand" evidence="10">
    <location>
        <begin position="372"/>
        <end position="374"/>
    </location>
</feature>
<feature type="helix" evidence="10">
    <location>
        <begin position="379"/>
        <end position="397"/>
    </location>
</feature>
<feature type="strand" evidence="9">
    <location>
        <begin position="403"/>
        <end position="405"/>
    </location>
</feature>
<feature type="helix" evidence="4">
    <location>
        <begin position="412"/>
        <end position="414"/>
    </location>
</feature>
<feature type="helix" evidence="10">
    <location>
        <begin position="415"/>
        <end position="466"/>
    </location>
</feature>
<feature type="helix" evidence="10">
    <location>
        <begin position="467"/>
        <end position="469"/>
    </location>
</feature>
<feature type="strand" evidence="10">
    <location>
        <begin position="470"/>
        <end position="472"/>
    </location>
</feature>
<feature type="strand" evidence="10">
    <location>
        <begin position="474"/>
        <end position="482"/>
    </location>
</feature>
<feature type="helix" evidence="10">
    <location>
        <begin position="486"/>
        <end position="493"/>
    </location>
</feature>
<feature type="helix" evidence="10">
    <location>
        <begin position="500"/>
        <end position="502"/>
    </location>
</feature>
<feature type="helix" evidence="10">
    <location>
        <begin position="503"/>
        <end position="511"/>
    </location>
</feature>
<name>HEMA_I57A5</name>
<protein>
    <recommendedName>
        <fullName evidence="1">Hemagglutinin</fullName>
    </recommendedName>
    <component>
        <recommendedName>
            <fullName evidence="1">Hemagglutinin HA1 chain</fullName>
        </recommendedName>
    </component>
    <component>
        <recommendedName>
            <fullName evidence="1">Hemagglutinin HA2 chain</fullName>
        </recommendedName>
    </component>
</protein>
<keyword id="KW-0002">3D-structure</keyword>
<keyword id="KW-1167">Clathrin- and caveolin-independent endocytosis of virus by host</keyword>
<keyword id="KW-1165">Clathrin-mediated endocytosis of virus by host</keyword>
<keyword id="KW-1015">Disulfide bond</keyword>
<keyword id="KW-1170">Fusion of virus membrane with host endosomal membrane</keyword>
<keyword id="KW-1168">Fusion of virus membrane with host membrane</keyword>
<keyword id="KW-0325">Glycoprotein</keyword>
<keyword id="KW-0348">Hemagglutinin</keyword>
<keyword id="KW-1032">Host cell membrane</keyword>
<keyword id="KW-1043">Host membrane</keyword>
<keyword id="KW-0945">Host-virus interaction</keyword>
<keyword id="KW-0449">Lipoprotein</keyword>
<keyword id="KW-0472">Membrane</keyword>
<keyword id="KW-0564">Palmitate</keyword>
<keyword id="KW-0732">Signal</keyword>
<keyword id="KW-0812">Transmembrane</keyword>
<keyword id="KW-1133">Transmembrane helix</keyword>
<keyword id="KW-1161">Viral attachment to host cell</keyword>
<keyword id="KW-0261">Viral envelope protein</keyword>
<keyword id="KW-1162">Viral penetration into host cytoplasm</keyword>
<keyword id="KW-0946">Virion</keyword>
<keyword id="KW-1164">Virus endocytosis by host</keyword>
<keyword id="KW-1160">Virus entry into host cell</keyword>
<reference key="1">
    <citation type="journal article" date="1993" name="Virology">
        <title>Origin of the pandemic 1957 H2 influenza A virus and the persistence of its possible progenitors in the avian reservoir.</title>
        <authorList>
            <person name="Schafer J.R."/>
            <person name="Kawaoka Y."/>
            <person name="Bean W.J."/>
            <person name="Suss J."/>
            <person name="Senne D."/>
            <person name="Webster R.G."/>
        </authorList>
    </citation>
    <scope>NUCLEOTIDE SEQUENCE [GENOMIC RNA]</scope>
</reference>
<evidence type="ECO:0000255" key="1">
    <source>
        <dbReference type="HAMAP-Rule" id="MF_04072"/>
    </source>
</evidence>
<evidence type="ECO:0000305" key="2"/>
<evidence type="ECO:0007829" key="3">
    <source>
        <dbReference type="PDB" id="2WR7"/>
    </source>
</evidence>
<evidence type="ECO:0007829" key="4">
    <source>
        <dbReference type="PDB" id="2WRB"/>
    </source>
</evidence>
<evidence type="ECO:0007829" key="5">
    <source>
        <dbReference type="PDB" id="8TP6"/>
    </source>
</evidence>
<evidence type="ECO:0007829" key="6">
    <source>
        <dbReference type="PDB" id="8TP9"/>
    </source>
</evidence>
<evidence type="ECO:0007829" key="7">
    <source>
        <dbReference type="PDB" id="8XHE"/>
    </source>
</evidence>
<evidence type="ECO:0007829" key="8">
    <source>
        <dbReference type="PDB" id="8XHF"/>
    </source>
</evidence>
<evidence type="ECO:0007829" key="9">
    <source>
        <dbReference type="PDB" id="8XHG"/>
    </source>
</evidence>
<evidence type="ECO:0007829" key="10">
    <source>
        <dbReference type="PDB" id="8XHH"/>
    </source>
</evidence>
<sequence length="562" mass="63162">MAIIYLILLFTAVRGDQICIGYHANNSTEKVDTILERNVTVTHAKDILEKTHNGKLCKLNGIPPLELGDCSIAGWLLGNPECDRLLSVPEWSYIMEKENPRDGLCYPGSFNDYEELKHLLSSVKHFEKVKILPKDRWTQHTTTGGSRACAVSGNPSFFRNMVWLTEKGSNYPVAKGSYNNTSGEQMLIIWGVHHPNDEKEQRTLYQNVGTYVSVGTSTLNKRSTPDIATRPKVNGLGSRMEFSWTLLDMWDTINFESTGNLIAPEYGFKISKRGSSGIMKTEGTLENCETKCQTPLGAINTTLPFHNVHPLTIGECPKYVKSEKLVLATGLRNVPQIESRGLFGAIAGFIEGGWQGMIDGWYGYHHSNDQGSGYAADKESTQKAFDGITNKVNSVIEKMNTQFEAVGKEFSNLERRLENLNKKMEDGFLDVWTYNAELLVLMENERTLDFHDSNVKNLYDKVRMQLRDNVKELGNGCFEFYHKCDDECMNSVKNGTYDYPKYEEESKLNRNEIKGVKLSSMGVYQILAIYATVAGSLSLAIMMAGISFWMCSNGSLQCRICI</sequence>
<organism>
    <name type="scientific">Influenza A virus (strain A/Singapore/1/1957 H2N2)</name>
    <dbReference type="NCBI Taxonomy" id="382781"/>
    <lineage>
        <taxon>Viruses</taxon>
        <taxon>Riboviria</taxon>
        <taxon>Orthornavirae</taxon>
        <taxon>Negarnaviricota</taxon>
        <taxon>Polyploviricotina</taxon>
        <taxon>Insthoviricetes</taxon>
        <taxon>Articulavirales</taxon>
        <taxon>Orthomyxoviridae</taxon>
        <taxon>Alphainfluenzavirus</taxon>
        <taxon>Alphainfluenzavirus influenzae</taxon>
        <taxon>Influenza A virus</taxon>
    </lineage>
</organism>
<organismHost>
    <name type="scientific">Aves</name>
    <dbReference type="NCBI Taxonomy" id="8782"/>
</organismHost>
<organismHost>
    <name type="scientific">Homo sapiens</name>
    <name type="common">Human</name>
    <dbReference type="NCBI Taxonomy" id="9606"/>
</organismHost>
<gene>
    <name evidence="1" type="primary">HA</name>
</gene>
<comment type="function">
    <text evidence="1">Binds to sialic acid-containing receptors on the cell surface, bringing about the attachment of the virus particle to the cell. This attachment induces virion internalization either through clathrin-dependent endocytosis or through clathrin- and caveolin-independent pathway. Plays a major role in the determination of host range restriction and virulence. Class I viral fusion protein. Responsible for penetration of the virus into the cell cytoplasm by mediating the fusion of the membrane of the endocytosed virus particle with the endosomal membrane. Low pH in endosomes induces an irreversible conformational change in HA2, releasing the fusion hydrophobic peptide. Several trimers are required to form a competent fusion pore.</text>
</comment>
<comment type="subunit">
    <text evidence="1">Homotrimer of disulfide-linked HA1-HA2.</text>
</comment>
<comment type="subcellular location">
    <subcellularLocation>
        <location evidence="1">Virion membrane</location>
        <topology evidence="1">Single-pass type I membrane protein</topology>
    </subcellularLocation>
    <subcellularLocation>
        <location evidence="1">Host apical cell membrane</location>
        <topology evidence="1">Single-pass type I membrane protein</topology>
    </subcellularLocation>
    <text evidence="1">Targeted to the apical plasma membrane in epithelial polarized cells through a signal present in the transmembrane domain. Associated with glycosphingolipid- and cholesterol-enriched detergent-resistant lipid rafts.</text>
</comment>
<comment type="PTM">
    <text evidence="1">Palmitoylated.</text>
</comment>
<comment type="PTM">
    <text evidence="1">In natural infection, inactive HA is matured into HA1 and HA2 outside the cell by one or more trypsin-like, arginine-specific endoprotease secreted by the bronchial epithelial cells. One identified protease that may be involved in this process is secreted in lungs by club cells.</text>
</comment>
<comment type="miscellaneous">
    <text>Major glycoprotein, comprises over 80% of the envelope proteins present in virus particle.</text>
</comment>
<comment type="miscellaneous">
    <text>The extent of infection into host organism is determined by HA. Influenza viruses bud from the apical surface of polarized epithelial cells (e.g. bronchial epithelial cells) into lumen of lungs and are therefore usually pneumotropic. The reason is that HA is cleaved by tryptase clara which is restricted to lungs. However, HAs of H5 and H7 pantropic avian viruses subtypes can be cleaved by furin and subtilisin-type enzymes, allowing the virus to grow in other organs than lungs.</text>
</comment>
<comment type="miscellaneous">
    <text evidence="2">The influenza A genome consist of 8 RNA segments. Genetic variation of hemagglutinin and/or neuraminidase genes results in the emergence of new influenza strains. The mechanism of variation can be the result of point mutations or the result of genetic reassortment between segments of two different strains.</text>
</comment>
<comment type="similarity">
    <text evidence="1">Belongs to the influenza viruses hemagglutinin family.</text>
</comment>
<dbReference type="EMBL" id="L11142">
    <property type="protein sequence ID" value="AAA43678.1"/>
    <property type="molecule type" value="Genomic_RNA"/>
</dbReference>
<dbReference type="PDB" id="2WR7">
    <property type="method" value="X-ray"/>
    <property type="resolution" value="2.50 A"/>
    <property type="chains" value="A/B/C=1-506"/>
</dbReference>
<dbReference type="PDB" id="2WRB">
    <property type="method" value="X-ray"/>
    <property type="resolution" value="3.10 A"/>
    <property type="chains" value="A/B/C=1-506"/>
</dbReference>
<dbReference type="PDB" id="2WRC">
    <property type="method" value="X-ray"/>
    <property type="resolution" value="2.71 A"/>
    <property type="chains" value="A/B/C=1-506"/>
</dbReference>
<dbReference type="PDB" id="8TP2">
    <property type="method" value="EM"/>
    <property type="resolution" value="3.10 A"/>
    <property type="chains" value="A/B/C=1-506"/>
</dbReference>
<dbReference type="PDB" id="8TP4">
    <property type="method" value="EM"/>
    <property type="resolution" value="3.30 A"/>
    <property type="chains" value="A/B/C=1-506"/>
</dbReference>
<dbReference type="PDB" id="8TP6">
    <property type="method" value="EM"/>
    <property type="resolution" value="3.10 A"/>
    <property type="chains" value="A/B/E=1-504"/>
</dbReference>
<dbReference type="PDB" id="8TP7">
    <property type="method" value="EM"/>
    <property type="resolution" value="2.80 A"/>
    <property type="chains" value="A/B/C=1-562"/>
</dbReference>
<dbReference type="PDB" id="8TP9">
    <property type="method" value="EM"/>
    <property type="resolution" value="3.10 A"/>
    <property type="chains" value="A/B/C=1-506"/>
</dbReference>
<dbReference type="PDB" id="8XHE">
    <property type="method" value="EM"/>
    <property type="resolution" value="2.64 A"/>
    <property type="chains" value="A/B/C=16-512"/>
</dbReference>
<dbReference type="PDB" id="8XHF">
    <property type="method" value="EM"/>
    <property type="resolution" value="2.39 A"/>
    <property type="chains" value="A/B/C=16-512"/>
</dbReference>
<dbReference type="PDB" id="8XHG">
    <property type="method" value="EM"/>
    <property type="resolution" value="2.54 A"/>
    <property type="chains" value="A/B/C=16-512"/>
</dbReference>
<dbReference type="PDB" id="8XHH">
    <property type="method" value="EM"/>
    <property type="resolution" value="2.38 A"/>
    <property type="chains" value="A/B/C=16-512"/>
</dbReference>
<dbReference type="PDB" id="8XR9">
    <property type="method" value="EM"/>
    <property type="resolution" value="2.60 A"/>
    <property type="chains" value="A/B/C=16-512"/>
</dbReference>
<dbReference type="PDB" id="8XRA">
    <property type="method" value="EM"/>
    <property type="resolution" value="2.31 A"/>
    <property type="chains" value="A/B/C=16-512"/>
</dbReference>
<dbReference type="PDBsum" id="2WR7"/>
<dbReference type="PDBsum" id="2WRB"/>
<dbReference type="PDBsum" id="2WRC"/>
<dbReference type="PDBsum" id="8TP2"/>
<dbReference type="PDBsum" id="8TP4"/>
<dbReference type="PDBsum" id="8TP6"/>
<dbReference type="PDBsum" id="8TP7"/>
<dbReference type="PDBsum" id="8TP9"/>
<dbReference type="PDBsum" id="8XHE"/>
<dbReference type="PDBsum" id="8XHF"/>
<dbReference type="PDBsum" id="8XHG"/>
<dbReference type="PDBsum" id="8XHH"/>
<dbReference type="PDBsum" id="8XR9"/>
<dbReference type="PDBsum" id="8XRA"/>
<dbReference type="EMDB" id="EMD-38348"/>
<dbReference type="EMDB" id="EMD-38349"/>
<dbReference type="EMDB" id="EMD-38350"/>
<dbReference type="EMDB" id="EMD-38351"/>
<dbReference type="EMDB" id="EMD-38599"/>
<dbReference type="EMDB" id="EMD-38600"/>
<dbReference type="SMR" id="Q67333"/>
<dbReference type="GlyCosmos" id="Q67333">
    <property type="glycosylation" value="7 sites, No reported glycans"/>
</dbReference>
<dbReference type="EvolutionaryTrace" id="Q67333"/>
<dbReference type="GO" id="GO:0020002">
    <property type="term" value="C:host cell plasma membrane"/>
    <property type="evidence" value="ECO:0007669"/>
    <property type="project" value="UniProtKB-SubCell"/>
</dbReference>
<dbReference type="GO" id="GO:0016020">
    <property type="term" value="C:membrane"/>
    <property type="evidence" value="ECO:0007669"/>
    <property type="project" value="UniProtKB-UniRule"/>
</dbReference>
<dbReference type="GO" id="GO:0019031">
    <property type="term" value="C:viral envelope"/>
    <property type="evidence" value="ECO:0007669"/>
    <property type="project" value="UniProtKB-UniRule"/>
</dbReference>
<dbReference type="GO" id="GO:0055036">
    <property type="term" value="C:virion membrane"/>
    <property type="evidence" value="ECO:0007669"/>
    <property type="project" value="UniProtKB-SubCell"/>
</dbReference>
<dbReference type="GO" id="GO:0046789">
    <property type="term" value="F:host cell surface receptor binding"/>
    <property type="evidence" value="ECO:0007669"/>
    <property type="project" value="UniProtKB-UniRule"/>
</dbReference>
<dbReference type="GO" id="GO:0075512">
    <property type="term" value="P:clathrin-dependent endocytosis of virus by host cell"/>
    <property type="evidence" value="ECO:0007669"/>
    <property type="project" value="UniProtKB-UniRule"/>
</dbReference>
<dbReference type="GO" id="GO:0039654">
    <property type="term" value="P:fusion of virus membrane with host endosome membrane"/>
    <property type="evidence" value="ECO:0007669"/>
    <property type="project" value="UniProtKB-UniRule"/>
</dbReference>
<dbReference type="GO" id="GO:0019064">
    <property type="term" value="P:fusion of virus membrane with host plasma membrane"/>
    <property type="evidence" value="ECO:0007669"/>
    <property type="project" value="InterPro"/>
</dbReference>
<dbReference type="GO" id="GO:0046761">
    <property type="term" value="P:viral budding from plasma membrane"/>
    <property type="evidence" value="ECO:0007669"/>
    <property type="project" value="UniProtKB-UniRule"/>
</dbReference>
<dbReference type="GO" id="GO:0019062">
    <property type="term" value="P:virion attachment to host cell"/>
    <property type="evidence" value="ECO:0007669"/>
    <property type="project" value="UniProtKB-KW"/>
</dbReference>
<dbReference type="Gene3D" id="3.90.20.10">
    <property type="match status" value="1"/>
</dbReference>
<dbReference type="Gene3D" id="3.90.209.20">
    <property type="match status" value="1"/>
</dbReference>
<dbReference type="Gene3D" id="2.10.77.10">
    <property type="entry name" value="Hemagglutinin Chain A, Domain 2"/>
    <property type="match status" value="1"/>
</dbReference>
<dbReference type="HAMAP" id="MF_04072">
    <property type="entry name" value="INFV_HEMA"/>
    <property type="match status" value="1"/>
</dbReference>
<dbReference type="InterPro" id="IPR008980">
    <property type="entry name" value="Capsid_hemagglutn"/>
</dbReference>
<dbReference type="InterPro" id="IPR013828">
    <property type="entry name" value="Hemagglutn_HA1_a/b_dom_sf"/>
</dbReference>
<dbReference type="InterPro" id="IPR000149">
    <property type="entry name" value="Hemagglutn_influenz_A"/>
</dbReference>
<dbReference type="InterPro" id="IPR001364">
    <property type="entry name" value="Hemagglutn_influenz_A/B"/>
</dbReference>
<dbReference type="Pfam" id="PF00509">
    <property type="entry name" value="Hemagglutinin"/>
    <property type="match status" value="1"/>
</dbReference>
<dbReference type="PRINTS" id="PR00330">
    <property type="entry name" value="HEMAGGLUTN1"/>
</dbReference>
<dbReference type="PRINTS" id="PR00329">
    <property type="entry name" value="HEMAGGLUTN12"/>
</dbReference>
<dbReference type="SUPFAM" id="SSF58064">
    <property type="entry name" value="Influenza hemagglutinin (stalk)"/>
    <property type="match status" value="1"/>
</dbReference>
<dbReference type="SUPFAM" id="SSF49818">
    <property type="entry name" value="Viral protein domain"/>
    <property type="match status" value="1"/>
</dbReference>